<gene>
    <name evidence="1" type="primary">speE</name>
    <name type="ordered locus">HP_0832</name>
</gene>
<feature type="chain" id="PRO_0000156483" description="Polyamine aminopropyltransferase">
    <location>
        <begin position="1"/>
        <end position="262"/>
    </location>
</feature>
<feature type="domain" description="PABS" evidence="1">
    <location>
        <begin position="1"/>
        <end position="249"/>
    </location>
</feature>
<feature type="active site" description="Proton acceptor" evidence="1">
    <location>
        <position position="155"/>
    </location>
</feature>
<feature type="binding site" evidence="1">
    <location>
        <position position="29"/>
    </location>
    <ligand>
        <name>S-methyl-5'-thioadenosine</name>
        <dbReference type="ChEBI" id="CHEBI:17509"/>
    </ligand>
</feature>
<feature type="binding site" evidence="1">
    <location>
        <position position="83"/>
    </location>
    <ligand>
        <name>spermidine</name>
        <dbReference type="ChEBI" id="CHEBI:57834"/>
    </ligand>
</feature>
<feature type="strand" evidence="6">
    <location>
        <begin position="2"/>
        <end position="8"/>
    </location>
</feature>
<feature type="strand" evidence="6">
    <location>
        <begin position="11"/>
        <end position="16"/>
    </location>
</feature>
<feature type="strand" evidence="6">
    <location>
        <begin position="18"/>
        <end position="25"/>
    </location>
</feature>
<feature type="strand" evidence="6">
    <location>
        <begin position="30"/>
        <end position="36"/>
    </location>
</feature>
<feature type="turn" evidence="6">
    <location>
        <begin position="37"/>
        <end position="39"/>
    </location>
</feature>
<feature type="strand" evidence="6">
    <location>
        <begin position="40"/>
        <end position="45"/>
    </location>
</feature>
<feature type="strand" evidence="6">
    <location>
        <begin position="48"/>
        <end position="51"/>
    </location>
</feature>
<feature type="helix" evidence="6">
    <location>
        <begin position="52"/>
        <end position="54"/>
    </location>
</feature>
<feature type="helix" evidence="6">
    <location>
        <begin position="56"/>
        <end position="67"/>
    </location>
</feature>
<feature type="strand" evidence="6">
    <location>
        <begin position="75"/>
        <end position="81"/>
    </location>
</feature>
<feature type="helix" evidence="6">
    <location>
        <begin position="84"/>
        <end position="90"/>
    </location>
</feature>
<feature type="strand" evidence="6">
    <location>
        <begin position="96"/>
        <end position="100"/>
    </location>
</feature>
<feature type="helix" evidence="6">
    <location>
        <begin position="104"/>
        <end position="107"/>
    </location>
</feature>
<feature type="helix" evidence="6">
    <location>
        <begin position="108"/>
        <end position="110"/>
    </location>
</feature>
<feature type="turn" evidence="6">
    <location>
        <begin position="111"/>
        <end position="113"/>
    </location>
</feature>
<feature type="helix" evidence="6">
    <location>
        <begin position="117"/>
        <end position="121"/>
    </location>
</feature>
<feature type="strand" evidence="6">
    <location>
        <begin position="126"/>
        <end position="131"/>
    </location>
</feature>
<feature type="helix" evidence="6">
    <location>
        <begin position="132"/>
        <end position="134"/>
    </location>
</feature>
<feature type="strand" evidence="6">
    <location>
        <begin position="140"/>
        <end position="147"/>
    </location>
</feature>
<feature type="helix" evidence="6">
    <location>
        <begin position="151"/>
        <end position="158"/>
    </location>
</feature>
<feature type="strand" evidence="6">
    <location>
        <begin position="161"/>
        <end position="172"/>
    </location>
</feature>
<feature type="turn" evidence="6">
    <location>
        <begin position="174"/>
        <end position="176"/>
    </location>
</feature>
<feature type="helix" evidence="6">
    <location>
        <begin position="178"/>
        <end position="189"/>
    </location>
</feature>
<feature type="strand" evidence="6">
    <location>
        <begin position="193"/>
        <end position="198"/>
    </location>
</feature>
<feature type="strand" evidence="6">
    <location>
        <begin position="208"/>
        <end position="216"/>
    </location>
</feature>
<feature type="turn" evidence="6">
    <location>
        <begin position="219"/>
        <end position="222"/>
    </location>
</feature>
<feature type="helix" evidence="6">
    <location>
        <begin position="225"/>
        <end position="228"/>
    </location>
</feature>
<feature type="helix" evidence="6">
    <location>
        <begin position="239"/>
        <end position="244"/>
    </location>
</feature>
<feature type="helix" evidence="6">
    <location>
        <begin position="250"/>
        <end position="255"/>
    </location>
</feature>
<feature type="helix" evidence="6">
    <location>
        <begin position="256"/>
        <end position="258"/>
    </location>
</feature>
<dbReference type="EC" id="2.5.1.16" evidence="1 3"/>
<dbReference type="EMBL" id="AE000511">
    <property type="protein sequence ID" value="AAD07882.1"/>
    <property type="molecule type" value="Genomic_DNA"/>
</dbReference>
<dbReference type="PIR" id="H64623">
    <property type="entry name" value="H64623"/>
</dbReference>
<dbReference type="RefSeq" id="NP_207625.1">
    <property type="nucleotide sequence ID" value="NC_000915.1"/>
</dbReference>
<dbReference type="RefSeq" id="WP_000265099.1">
    <property type="nucleotide sequence ID" value="NC_018939.1"/>
</dbReference>
<dbReference type="PDB" id="2CMG">
    <property type="method" value="X-ray"/>
    <property type="resolution" value="2.00 A"/>
    <property type="chains" value="A/B=1-262"/>
</dbReference>
<dbReference type="PDB" id="2CMH">
    <property type="method" value="X-ray"/>
    <property type="resolution" value="2.30 A"/>
    <property type="chains" value="A/B/C=1-262"/>
</dbReference>
<dbReference type="PDB" id="5X0Z">
    <property type="method" value="X-ray"/>
    <property type="resolution" value="2.70 A"/>
    <property type="chains" value="A/B/C/D=1-262"/>
</dbReference>
<dbReference type="PDBsum" id="2CMG"/>
<dbReference type="PDBsum" id="2CMH"/>
<dbReference type="PDBsum" id="5X0Z"/>
<dbReference type="SMR" id="O25503"/>
<dbReference type="FunCoup" id="O25503">
    <property type="interactions" value="289"/>
</dbReference>
<dbReference type="STRING" id="85962.HP_0832"/>
<dbReference type="PaxDb" id="85962-C694_04265"/>
<dbReference type="EnsemblBacteria" id="AAD07882">
    <property type="protein sequence ID" value="AAD07882"/>
    <property type="gene ID" value="HP_0832"/>
</dbReference>
<dbReference type="KEGG" id="heo:C694_04265"/>
<dbReference type="KEGG" id="hpy:HP_0832"/>
<dbReference type="PATRIC" id="fig|85962.47.peg.887"/>
<dbReference type="eggNOG" id="COG0421">
    <property type="taxonomic scope" value="Bacteria"/>
</dbReference>
<dbReference type="InParanoid" id="O25503"/>
<dbReference type="OrthoDB" id="9793120at2"/>
<dbReference type="PhylomeDB" id="O25503"/>
<dbReference type="BRENDA" id="2.5.1.16">
    <property type="organism ID" value="2604"/>
</dbReference>
<dbReference type="UniPathway" id="UPA00248">
    <property type="reaction ID" value="UER00314"/>
</dbReference>
<dbReference type="EvolutionaryTrace" id="O25503"/>
<dbReference type="Proteomes" id="UP000000429">
    <property type="component" value="Chromosome"/>
</dbReference>
<dbReference type="GO" id="GO:0005829">
    <property type="term" value="C:cytosol"/>
    <property type="evidence" value="ECO:0000318"/>
    <property type="project" value="GO_Central"/>
</dbReference>
<dbReference type="GO" id="GO:0004766">
    <property type="term" value="F:spermidine synthase activity"/>
    <property type="evidence" value="ECO:0000318"/>
    <property type="project" value="GO_Central"/>
</dbReference>
<dbReference type="GO" id="GO:0006596">
    <property type="term" value="P:polyamine biosynthetic process"/>
    <property type="evidence" value="ECO:0000314"/>
    <property type="project" value="UniProtKB"/>
</dbReference>
<dbReference type="GO" id="GO:0008295">
    <property type="term" value="P:spermidine biosynthetic process"/>
    <property type="evidence" value="ECO:0000314"/>
    <property type="project" value="UniProtKB"/>
</dbReference>
<dbReference type="FunFam" id="3.40.50.150:FF:000466">
    <property type="entry name" value="Polyamine aminopropyltransferase"/>
    <property type="match status" value="1"/>
</dbReference>
<dbReference type="Gene3D" id="2.30.140.10">
    <property type="entry name" value="Spermidine synthase, tetramerisation domain"/>
    <property type="match status" value="1"/>
</dbReference>
<dbReference type="Gene3D" id="3.40.50.150">
    <property type="entry name" value="Vaccinia Virus protein VP39"/>
    <property type="match status" value="1"/>
</dbReference>
<dbReference type="HAMAP" id="MF_00198">
    <property type="entry name" value="Spermidine_synth"/>
    <property type="match status" value="1"/>
</dbReference>
<dbReference type="InterPro" id="IPR030374">
    <property type="entry name" value="PABS"/>
</dbReference>
<dbReference type="InterPro" id="IPR029063">
    <property type="entry name" value="SAM-dependent_MTases_sf"/>
</dbReference>
<dbReference type="InterPro" id="IPR001045">
    <property type="entry name" value="Spermi_synthase"/>
</dbReference>
<dbReference type="InterPro" id="IPR035246">
    <property type="entry name" value="Spermidine_synt_N"/>
</dbReference>
<dbReference type="InterPro" id="IPR037163">
    <property type="entry name" value="Spermidine_synt_N_sf"/>
</dbReference>
<dbReference type="NCBIfam" id="NF001811">
    <property type="entry name" value="PRK00536.1"/>
    <property type="match status" value="1"/>
</dbReference>
<dbReference type="PANTHER" id="PTHR11558:SF11">
    <property type="entry name" value="SPERMIDINE SYNTHASE"/>
    <property type="match status" value="1"/>
</dbReference>
<dbReference type="PANTHER" id="PTHR11558">
    <property type="entry name" value="SPERMIDINE/SPERMINE SYNTHASE"/>
    <property type="match status" value="1"/>
</dbReference>
<dbReference type="Pfam" id="PF17284">
    <property type="entry name" value="Spermine_synt_N"/>
    <property type="match status" value="1"/>
</dbReference>
<dbReference type="Pfam" id="PF01564">
    <property type="entry name" value="Spermine_synth"/>
    <property type="match status" value="1"/>
</dbReference>
<dbReference type="SUPFAM" id="SSF53335">
    <property type="entry name" value="S-adenosyl-L-methionine-dependent methyltransferases"/>
    <property type="match status" value="1"/>
</dbReference>
<dbReference type="PROSITE" id="PS51006">
    <property type="entry name" value="PABS_2"/>
    <property type="match status" value="1"/>
</dbReference>
<reference key="1">
    <citation type="journal article" date="1997" name="Nature">
        <title>The complete genome sequence of the gastric pathogen Helicobacter pylori.</title>
        <authorList>
            <person name="Tomb J.-F."/>
            <person name="White O."/>
            <person name="Kerlavage A.R."/>
            <person name="Clayton R.A."/>
            <person name="Sutton G.G."/>
            <person name="Fleischmann R.D."/>
            <person name="Ketchum K.A."/>
            <person name="Klenk H.-P."/>
            <person name="Gill S.R."/>
            <person name="Dougherty B.A."/>
            <person name="Nelson K.E."/>
            <person name="Quackenbush J."/>
            <person name="Zhou L."/>
            <person name="Kirkness E.F."/>
            <person name="Peterson S.N."/>
            <person name="Loftus B.J."/>
            <person name="Richardson D.L."/>
            <person name="Dodson R.J."/>
            <person name="Khalak H.G."/>
            <person name="Glodek A."/>
            <person name="McKenney K."/>
            <person name="FitzGerald L.M."/>
            <person name="Lee N."/>
            <person name="Adams M.D."/>
            <person name="Hickey E.K."/>
            <person name="Berg D.E."/>
            <person name="Gocayne J.D."/>
            <person name="Utterback T.R."/>
            <person name="Peterson J.D."/>
            <person name="Kelley J.M."/>
            <person name="Cotton M.D."/>
            <person name="Weidman J.F."/>
            <person name="Fujii C."/>
            <person name="Bowman C."/>
            <person name="Watthey L."/>
            <person name="Wallin E."/>
            <person name="Hayes W.S."/>
            <person name="Borodovsky M."/>
            <person name="Karp P.D."/>
            <person name="Smith H.O."/>
            <person name="Fraser C.M."/>
            <person name="Venter J.C."/>
        </authorList>
    </citation>
    <scope>NUCLEOTIDE SEQUENCE [LARGE SCALE GENOMIC DNA]</scope>
    <source>
        <strain>ATCC 700392 / 26695</strain>
    </source>
</reference>
<reference key="2">
    <citation type="journal article" date="2004" name="Acta Crystallogr. D">
        <title>Crystallization and preliminary X-ray diffraction analysis of spermidine synthase from Helicobacter pylori.</title>
        <authorList>
            <person name="Lu P.-K."/>
            <person name="Chien S.-Y."/>
            <person name="Tsai J.-Y."/>
            <person name="Fong C.-T."/>
            <person name="Lee M.-J."/>
            <person name="Huang H."/>
            <person name="Sun Y.-J."/>
        </authorList>
    </citation>
    <scope>CRYSTALLIZATION</scope>
    <scope>SUBUNIT</scope>
    <source>
        <strain>ATCC 700392 / 26695</strain>
    </source>
</reference>
<reference key="3">
    <citation type="journal article" date="2005" name="Protein Expr. Purif.">
        <title>Cloning and characterization of spermidine synthase and its implication in polyamine biosynthesis in Helicobacter pylori strain 26695.</title>
        <authorList>
            <person name="Lee M.-J."/>
            <person name="Huang C.-Y."/>
            <person name="Sun Y.-J."/>
            <person name="Huang H."/>
        </authorList>
    </citation>
    <scope>FUNCTION</scope>
    <scope>CATALYTIC ACTIVITY</scope>
    <scope>MASS SPECTROMETRY</scope>
    <scope>ACTIVITY REGULATION</scope>
    <scope>SUBUNIT</scope>
    <scope>SUBSTRATE SPECIFICITY</scope>
    <source>
        <strain>ATCC 700392 / 26695</strain>
    </source>
</reference>
<reference key="4">
    <citation type="journal article" date="2007" name="Proteins">
        <title>Crystal structure of Helicobacter pylori spermidine synthase: a Rossmann-like fold with a distinct active site.</title>
        <authorList>
            <person name="Lu P.K."/>
            <person name="Tsai J.Y."/>
            <person name="Chien H.Y."/>
            <person name="Huang H."/>
            <person name="Chu C.H."/>
            <person name="Sun Y.J."/>
        </authorList>
    </citation>
    <scope>X-RAY CRYSTALLOGRAPHY (2.0 ANGSTROMS)</scope>
    <scope>SUBUNIT</scope>
</reference>
<keyword id="KW-0002">3D-structure</keyword>
<keyword id="KW-0963">Cytoplasm</keyword>
<keyword id="KW-0620">Polyamine biosynthesis</keyword>
<keyword id="KW-1185">Reference proteome</keyword>
<keyword id="KW-0745">Spermidine biosynthesis</keyword>
<keyword id="KW-0808">Transferase</keyword>
<proteinExistence type="evidence at protein level"/>
<organism>
    <name type="scientific">Helicobacter pylori (strain ATCC 700392 / 26695)</name>
    <name type="common">Campylobacter pylori</name>
    <dbReference type="NCBI Taxonomy" id="85962"/>
    <lineage>
        <taxon>Bacteria</taxon>
        <taxon>Pseudomonadati</taxon>
        <taxon>Campylobacterota</taxon>
        <taxon>Epsilonproteobacteria</taxon>
        <taxon>Campylobacterales</taxon>
        <taxon>Helicobacteraceae</taxon>
        <taxon>Helicobacter</taxon>
    </lineage>
</organism>
<comment type="function">
    <text evidence="3">Involved in the cell growth and proliferation. Catalyzes the irreversible transfer of a propylamine group from the amino donor S-adenosylmethioninamine (decarboxy-AdoMet) to putrescine (1,4-diaminobutane) to yield spermidine. Spermidine cannot be used as an aminopropyl acceptor.</text>
</comment>
<comment type="catalytic activity">
    <reaction evidence="1 3">
        <text>S-adenosyl 3-(methylsulfanyl)propylamine + putrescine = S-methyl-5'-thioadenosine + spermidine + H(+)</text>
        <dbReference type="Rhea" id="RHEA:12721"/>
        <dbReference type="ChEBI" id="CHEBI:15378"/>
        <dbReference type="ChEBI" id="CHEBI:17509"/>
        <dbReference type="ChEBI" id="CHEBI:57443"/>
        <dbReference type="ChEBI" id="CHEBI:57834"/>
        <dbReference type="ChEBI" id="CHEBI:326268"/>
        <dbReference type="EC" id="2.5.1.16"/>
    </reaction>
</comment>
<comment type="activity regulation">
    <text evidence="3">Inhibited by methylglyoxal bis(cyclopentylamidinohydrazone)(MGBCP).</text>
</comment>
<comment type="pathway">
    <text evidence="1">Amine and polyamine biosynthesis; spermidine biosynthesis; spermidine from putrescine: step 1/1.</text>
</comment>
<comment type="subunit">
    <text evidence="2 3 4">Homodimer.</text>
</comment>
<comment type="subcellular location">
    <subcellularLocation>
        <location evidence="1">Cytoplasm</location>
    </subcellularLocation>
</comment>
<comment type="mass spectrometry"/>
<comment type="similarity">
    <text evidence="1">Belongs to the spermidine/spermine synthase family.</text>
</comment>
<accession>O25503</accession>
<evidence type="ECO:0000255" key="1">
    <source>
        <dbReference type="HAMAP-Rule" id="MF_00198"/>
    </source>
</evidence>
<evidence type="ECO:0000269" key="2">
    <source>
    </source>
</evidence>
<evidence type="ECO:0000269" key="3">
    <source>
    </source>
</evidence>
<evidence type="ECO:0000269" key="4">
    <source>
    </source>
</evidence>
<evidence type="ECO:0000303" key="5">
    <source>
    </source>
</evidence>
<evidence type="ECO:0007829" key="6">
    <source>
        <dbReference type="PDB" id="2CMG"/>
    </source>
</evidence>
<sequence>MWITQEITPYLRKEYTIEAKLLDVRSEHNILEIFKSKDFGEIAMLNRQLLFKNFLHIESELLAHMGGCTKKELKEVLIVDGFDLELAHQLFKYDTHIDFVQADEKILDSFISFFPHFHEVKNNKNFTHAKQLLDLDIKKYDLIFCLQEPDIHRIDGLKRMLKEDGVFISVAKHPLLEHVSMQNALKNMGGVFSVAMPFVAPLRILSNKGYIYASFKTHPLKDLMTPKIEALTSVRYYNEDIHRAAFALPKNLQEVFKDNIKS</sequence>
<protein>
    <recommendedName>
        <fullName evidence="1 5">Polyamine aminopropyltransferase</fullName>
    </recommendedName>
    <alternativeName>
        <fullName evidence="1">Putrescine aminopropyltransferase</fullName>
        <shortName evidence="1">PAPT</shortName>
    </alternativeName>
    <alternativeName>
        <fullName evidence="1 5">Spermidine synthase</fullName>
        <shortName evidence="1 5">SPDS</shortName>
        <shortName evidence="1 5">SPDSY</shortName>
        <ecNumber evidence="1 3">2.5.1.16</ecNumber>
    </alternativeName>
</protein>
<name>SPEE_HELPY</name>